<sequence length="1108" mass="120638">MSAWLLPAGGLPGAGFCVPARQSPSSFSRVLRWPRPGLPGLLLLLLLPSPSALSAVFKVGVLGPWACDPIFARARPDLAARLAANRLNRDFALDGGPRFEVALLPEPCLTPGSLGAVSSALSRVSGLVGPVNPAACRPAELLAQEAGVALVPWGCPGTRAAGTTAPAVTPAADALYVLLRAFRWARVALITAPQDLWVEAGRALSTALRARGLPVALVTSMETSDRSGAREALGRIRDGPRVRVVIMVMHSVLLGGEEQRYLLEAAEELALTDGSLVFLPFDTLHYALSPGPEALAAFVNSSQLRRAHDAVLTLTRRCPPGGSVQDSLRRAQEHQELPLDLNLKQVSPLFGTIYDAVFLLAGGVKRARTAVGGGWVSGASVARQVREAQVSGFCGVLGRTEEPSFVLLDTDASGEQLFATHLLDPVLGSLRSAGTPMHFPRGGPAPGPDPSCWFDPDVICNGGVEPGLVFVGFLLVIGMGLTGAFLAHYLRHRLLHMQMASGPNKIILTLEDVTFLHPPGGSSRKVVQGSRSSLATRSASDIRSVPSQPQESTNVGLYEGDWVWLKKFPGEHHMAIRPATKTAFSKLRELRHENVALYLGLFLAGTADSPATPGEGILAVVSEHCARGSLHDLLAQREIKLDWMFKSSLLLDLIKGMRYLHHRGVAHGRLKSRNCVVDGRFVLKVTDHGHGRLLEAQRVLPEPPSAEDQLWTAPELLRDPSLERRGTLAGDVFSLAIIMQEVVCRSTPYAMLELTPEEVIQRVRSPPPLCRPLVSMDQAPMECIQLMTQCWAEHPELRPSMDLTFDLFKSINKGRKTNIIDSMLRMLEQYSSNLEDLIRERTEELEQEKQKTDRLLTQMLPPSVAEALKMGTSVEPEYFEEVTLYFSDIVGFTTISAMSEPIEVVDLLNDLYTLFDAIIGAHDVYKVETIGDAYMVASGLPQRNGQRHAAEIANMSLDILSAVGSFRMRHMPEVPVRIRIGLHSGPCVAGVVGLTMPRYCLFGDTVNTASRMESTGLPYRIHVNMSTVRILRALDQGFQMECRGRTELKGKGIEDTYWLVGRLGFNKPIPKPPDLQPGASNHGISLQEIPPERRKKLEKARPGQFTGK</sequence>
<dbReference type="EC" id="4.6.1.2" evidence="10"/>
<dbReference type="EMBL" id="L41933">
    <property type="protein sequence ID" value="AAC42081.1"/>
    <property type="molecule type" value="Genomic_DNA"/>
</dbReference>
<dbReference type="EMBL" id="AL645527">
    <property type="status" value="NOT_ANNOTATED_CDS"/>
    <property type="molecule type" value="Genomic_DNA"/>
</dbReference>
<dbReference type="EMBL" id="CH466601">
    <property type="protein sequence ID" value="EDL10484.1"/>
    <property type="molecule type" value="Genomic_DNA"/>
</dbReference>
<dbReference type="CCDS" id="CCDS24887.1"/>
<dbReference type="RefSeq" id="NP_032218.2">
    <property type="nucleotide sequence ID" value="NM_008192.3"/>
</dbReference>
<dbReference type="RefSeq" id="XP_006532307.1">
    <property type="nucleotide sequence ID" value="XM_006532244.4"/>
</dbReference>
<dbReference type="SMR" id="P52785"/>
<dbReference type="BioGRID" id="200127">
    <property type="interactions" value="9"/>
</dbReference>
<dbReference type="FunCoup" id="P52785">
    <property type="interactions" value="1301"/>
</dbReference>
<dbReference type="IntAct" id="P52785">
    <property type="interactions" value="1"/>
</dbReference>
<dbReference type="STRING" id="10090.ENSMUSP00000021259"/>
<dbReference type="GlyCosmos" id="P52785">
    <property type="glycosylation" value="1 site, No reported glycans"/>
</dbReference>
<dbReference type="GlyGen" id="P52785">
    <property type="glycosylation" value="3 sites"/>
</dbReference>
<dbReference type="iPTMnet" id="P52785"/>
<dbReference type="PhosphoSitePlus" id="P52785"/>
<dbReference type="PaxDb" id="10090-ENSMUSP00000021259"/>
<dbReference type="ProteomicsDB" id="271065"/>
<dbReference type="Antibodypedia" id="12365">
    <property type="antibodies" value="269 antibodies from 29 providers"/>
</dbReference>
<dbReference type="DNASU" id="14919"/>
<dbReference type="Ensembl" id="ENSMUST00000021259.9">
    <property type="protein sequence ID" value="ENSMUSP00000021259.3"/>
    <property type="gene ID" value="ENSMUSG00000020890.12"/>
</dbReference>
<dbReference type="Ensembl" id="ENSMUST00000108664.2">
    <property type="protein sequence ID" value="ENSMUSP00000104304.2"/>
    <property type="gene ID" value="ENSMUSG00000020890.12"/>
</dbReference>
<dbReference type="Ensembl" id="ENSMUST00000108665.8">
    <property type="protein sequence ID" value="ENSMUSP00000104305.2"/>
    <property type="gene ID" value="ENSMUSG00000020890.12"/>
</dbReference>
<dbReference type="GeneID" id="14919"/>
<dbReference type="KEGG" id="mmu:14919"/>
<dbReference type="UCSC" id="uc007jpn.2">
    <property type="organism name" value="mouse"/>
</dbReference>
<dbReference type="AGR" id="MGI:105123"/>
<dbReference type="CTD" id="14919"/>
<dbReference type="MGI" id="MGI:105123">
    <property type="gene designation" value="Gucy2e"/>
</dbReference>
<dbReference type="VEuPathDB" id="HostDB:ENSMUSG00000020890"/>
<dbReference type="eggNOG" id="KOG1023">
    <property type="taxonomic scope" value="Eukaryota"/>
</dbReference>
<dbReference type="GeneTree" id="ENSGT00940000161326"/>
<dbReference type="HOGENOM" id="CLU_001072_1_0_1"/>
<dbReference type="InParanoid" id="P52785"/>
<dbReference type="OMA" id="NIGVYEG"/>
<dbReference type="OrthoDB" id="1890790at2759"/>
<dbReference type="PhylomeDB" id="P52785"/>
<dbReference type="TreeFam" id="TF106338"/>
<dbReference type="Reactome" id="R-MMU-2514859">
    <property type="pathway name" value="Inactivation, recovery and regulation of the phototransduction cascade"/>
</dbReference>
<dbReference type="BioGRID-ORCS" id="14919">
    <property type="hits" value="2 hits in 84 CRISPR screens"/>
</dbReference>
<dbReference type="ChiTaRS" id="Gucy2e">
    <property type="organism name" value="mouse"/>
</dbReference>
<dbReference type="PRO" id="PR:P52785"/>
<dbReference type="Proteomes" id="UP000000589">
    <property type="component" value="Chromosome 11"/>
</dbReference>
<dbReference type="RNAct" id="P52785">
    <property type="molecule type" value="protein"/>
</dbReference>
<dbReference type="Bgee" id="ENSMUSG00000020890">
    <property type="expression patterns" value="Expressed in retinal neural layer and 18 other cell types or tissues"/>
</dbReference>
<dbReference type="GO" id="GO:0005789">
    <property type="term" value="C:endoplasmic reticulum membrane"/>
    <property type="evidence" value="ECO:0007669"/>
    <property type="project" value="UniProtKB-SubCell"/>
</dbReference>
<dbReference type="GO" id="GO:0042622">
    <property type="term" value="C:photoreceptor outer segment membrane"/>
    <property type="evidence" value="ECO:0000314"/>
    <property type="project" value="UniProtKB"/>
</dbReference>
<dbReference type="GO" id="GO:0005524">
    <property type="term" value="F:ATP binding"/>
    <property type="evidence" value="ECO:0007669"/>
    <property type="project" value="InterPro"/>
</dbReference>
<dbReference type="GO" id="GO:0005525">
    <property type="term" value="F:GTP binding"/>
    <property type="evidence" value="ECO:0007669"/>
    <property type="project" value="UniProtKB-KW"/>
</dbReference>
<dbReference type="GO" id="GO:0004383">
    <property type="term" value="F:guanylate cyclase activity"/>
    <property type="evidence" value="ECO:0000314"/>
    <property type="project" value="UniProtKB"/>
</dbReference>
<dbReference type="GO" id="GO:0042803">
    <property type="term" value="F:protein homodimerization activity"/>
    <property type="evidence" value="ECO:0000250"/>
    <property type="project" value="UniProtKB"/>
</dbReference>
<dbReference type="GO" id="GO:0004672">
    <property type="term" value="F:protein kinase activity"/>
    <property type="evidence" value="ECO:0007669"/>
    <property type="project" value="InterPro"/>
</dbReference>
<dbReference type="GO" id="GO:0044877">
    <property type="term" value="F:protein-containing complex binding"/>
    <property type="evidence" value="ECO:0007669"/>
    <property type="project" value="Ensembl"/>
</dbReference>
<dbReference type="GO" id="GO:0006182">
    <property type="term" value="P:cGMP biosynthetic process"/>
    <property type="evidence" value="ECO:0000314"/>
    <property type="project" value="UniProtKB"/>
</dbReference>
<dbReference type="GO" id="GO:0019934">
    <property type="term" value="P:cGMP-mediated signaling"/>
    <property type="evidence" value="ECO:0007669"/>
    <property type="project" value="Ensembl"/>
</dbReference>
<dbReference type="GO" id="GO:0007601">
    <property type="term" value="P:visual perception"/>
    <property type="evidence" value="ECO:0007669"/>
    <property type="project" value="UniProtKB-KW"/>
</dbReference>
<dbReference type="CDD" id="cd07302">
    <property type="entry name" value="CHD"/>
    <property type="match status" value="1"/>
</dbReference>
<dbReference type="CDD" id="cd06371">
    <property type="entry name" value="PBP1_sensory_GC_DEF-like"/>
    <property type="match status" value="1"/>
</dbReference>
<dbReference type="CDD" id="cd14043">
    <property type="entry name" value="PK_GC-2D"/>
    <property type="match status" value="1"/>
</dbReference>
<dbReference type="FunFam" id="1.10.510.10:FF:000507">
    <property type="entry name" value="Guanylate cyclase"/>
    <property type="match status" value="1"/>
</dbReference>
<dbReference type="FunFam" id="3.30.70.1230:FF:000013">
    <property type="entry name" value="Guanylate cyclase"/>
    <property type="match status" value="1"/>
</dbReference>
<dbReference type="FunFam" id="3.40.50.2300:FF:000114">
    <property type="entry name" value="Guanylate cyclase"/>
    <property type="match status" value="1"/>
</dbReference>
<dbReference type="Gene3D" id="3.40.50.2300">
    <property type="match status" value="1"/>
</dbReference>
<dbReference type="Gene3D" id="3.30.70.1230">
    <property type="entry name" value="Nucleotide cyclase"/>
    <property type="match status" value="1"/>
</dbReference>
<dbReference type="Gene3D" id="1.10.510.10">
    <property type="entry name" value="Transferase(Phosphotransferase) domain 1"/>
    <property type="match status" value="1"/>
</dbReference>
<dbReference type="InterPro" id="IPR001054">
    <property type="entry name" value="A/G_cyclase"/>
</dbReference>
<dbReference type="InterPro" id="IPR018297">
    <property type="entry name" value="A/G_cyclase_CS"/>
</dbReference>
<dbReference type="InterPro" id="IPR001828">
    <property type="entry name" value="ANF_lig-bd_rcpt"/>
</dbReference>
<dbReference type="InterPro" id="IPR050401">
    <property type="entry name" value="Cyclic_nucleotide_synthase"/>
</dbReference>
<dbReference type="InterPro" id="IPR011645">
    <property type="entry name" value="HNOB_dom_associated"/>
</dbReference>
<dbReference type="InterPro" id="IPR011009">
    <property type="entry name" value="Kinase-like_dom_sf"/>
</dbReference>
<dbReference type="InterPro" id="IPR029787">
    <property type="entry name" value="Nucleotide_cyclase"/>
</dbReference>
<dbReference type="InterPro" id="IPR028082">
    <property type="entry name" value="Peripla_BP_I"/>
</dbReference>
<dbReference type="InterPro" id="IPR000719">
    <property type="entry name" value="Prot_kinase_dom"/>
</dbReference>
<dbReference type="InterPro" id="IPR001245">
    <property type="entry name" value="Ser-Thr/Tyr_kinase_cat_dom"/>
</dbReference>
<dbReference type="PANTHER" id="PTHR11920">
    <property type="entry name" value="GUANYLYL CYCLASE"/>
    <property type="match status" value="1"/>
</dbReference>
<dbReference type="PANTHER" id="PTHR11920:SF228">
    <property type="entry name" value="RETINAL GUANYLYL CYCLASE 1"/>
    <property type="match status" value="1"/>
</dbReference>
<dbReference type="Pfam" id="PF01094">
    <property type="entry name" value="ANF_receptor"/>
    <property type="match status" value="1"/>
</dbReference>
<dbReference type="Pfam" id="PF00211">
    <property type="entry name" value="Guanylate_cyc"/>
    <property type="match status" value="1"/>
</dbReference>
<dbReference type="Pfam" id="PF07701">
    <property type="entry name" value="HNOBA"/>
    <property type="match status" value="1"/>
</dbReference>
<dbReference type="Pfam" id="PF07714">
    <property type="entry name" value="PK_Tyr_Ser-Thr"/>
    <property type="match status" value="1"/>
</dbReference>
<dbReference type="SMART" id="SM00044">
    <property type="entry name" value="CYCc"/>
    <property type="match status" value="1"/>
</dbReference>
<dbReference type="SUPFAM" id="SSF55073">
    <property type="entry name" value="Nucleotide cyclase"/>
    <property type="match status" value="1"/>
</dbReference>
<dbReference type="SUPFAM" id="SSF53822">
    <property type="entry name" value="Periplasmic binding protein-like I"/>
    <property type="match status" value="1"/>
</dbReference>
<dbReference type="SUPFAM" id="SSF56112">
    <property type="entry name" value="Protein kinase-like (PK-like)"/>
    <property type="match status" value="1"/>
</dbReference>
<dbReference type="PROSITE" id="PS00452">
    <property type="entry name" value="GUANYLATE_CYCLASE_1"/>
    <property type="match status" value="1"/>
</dbReference>
<dbReference type="PROSITE" id="PS50125">
    <property type="entry name" value="GUANYLATE_CYCLASE_2"/>
    <property type="match status" value="1"/>
</dbReference>
<dbReference type="PROSITE" id="PS50011">
    <property type="entry name" value="PROTEIN_KINASE_DOM"/>
    <property type="match status" value="1"/>
</dbReference>
<evidence type="ECO:0000250" key="1"/>
<evidence type="ECO:0000250" key="2">
    <source>
        <dbReference type="UniProtKB" id="P51840"/>
    </source>
</evidence>
<evidence type="ECO:0000250" key="3">
    <source>
        <dbReference type="UniProtKB" id="P55203"/>
    </source>
</evidence>
<evidence type="ECO:0000250" key="4">
    <source>
        <dbReference type="UniProtKB" id="Q02846"/>
    </source>
</evidence>
<evidence type="ECO:0000255" key="5"/>
<evidence type="ECO:0000255" key="6">
    <source>
        <dbReference type="PROSITE-ProRule" id="PRU00099"/>
    </source>
</evidence>
<evidence type="ECO:0000255" key="7">
    <source>
        <dbReference type="PROSITE-ProRule" id="PRU00159"/>
    </source>
</evidence>
<evidence type="ECO:0000256" key="8">
    <source>
        <dbReference type="SAM" id="MobiDB-lite"/>
    </source>
</evidence>
<evidence type="ECO:0000269" key="9">
    <source>
    </source>
</evidence>
<evidence type="ECO:0000269" key="10">
    <source>
    </source>
</evidence>
<evidence type="ECO:0000305" key="11"/>
<keyword id="KW-0966">Cell projection</keyword>
<keyword id="KW-0141">cGMP biosynthesis</keyword>
<keyword id="KW-1015">Disulfide bond</keyword>
<keyword id="KW-0256">Endoplasmic reticulum</keyword>
<keyword id="KW-0325">Glycoprotein</keyword>
<keyword id="KW-0342">GTP-binding</keyword>
<keyword id="KW-0456">Lyase</keyword>
<keyword id="KW-0472">Membrane</keyword>
<keyword id="KW-0547">Nucleotide-binding</keyword>
<keyword id="KW-1185">Reference proteome</keyword>
<keyword id="KW-0716">Sensory transduction</keyword>
<keyword id="KW-0732">Signal</keyword>
<keyword id="KW-0812">Transmembrane</keyword>
<keyword id="KW-1133">Transmembrane helix</keyword>
<keyword id="KW-0844">Vision</keyword>
<reference key="1">
    <citation type="journal article" date="1996" name="Genomics">
        <title>Chromosomal localization and genomic organization of genes encoding guanylyl cyclase receptors expressed in olfactory sensory neurons and retina.</title>
        <authorList>
            <person name="Yang R.B."/>
            <person name="Fulle H.J."/>
            <person name="Garbers D.L."/>
        </authorList>
    </citation>
    <scope>NUCLEOTIDE SEQUENCE [GENOMIC DNA]</scope>
    <source>
        <tissue>Liver</tissue>
    </source>
</reference>
<reference key="2">
    <citation type="journal article" date="2009" name="PLoS Biol.">
        <title>Lineage-specific biology revealed by a finished genome assembly of the mouse.</title>
        <authorList>
            <person name="Church D.M."/>
            <person name="Goodstadt L."/>
            <person name="Hillier L.W."/>
            <person name="Zody M.C."/>
            <person name="Goldstein S."/>
            <person name="She X."/>
            <person name="Bult C.J."/>
            <person name="Agarwala R."/>
            <person name="Cherry J.L."/>
            <person name="DiCuccio M."/>
            <person name="Hlavina W."/>
            <person name="Kapustin Y."/>
            <person name="Meric P."/>
            <person name="Maglott D."/>
            <person name="Birtle Z."/>
            <person name="Marques A.C."/>
            <person name="Graves T."/>
            <person name="Zhou S."/>
            <person name="Teague B."/>
            <person name="Potamousis K."/>
            <person name="Churas C."/>
            <person name="Place M."/>
            <person name="Herschleb J."/>
            <person name="Runnheim R."/>
            <person name="Forrest D."/>
            <person name="Amos-Landgraf J."/>
            <person name="Schwartz D.C."/>
            <person name="Cheng Z."/>
            <person name="Lindblad-Toh K."/>
            <person name="Eichler E.E."/>
            <person name="Ponting C.P."/>
        </authorList>
    </citation>
    <scope>NUCLEOTIDE SEQUENCE [LARGE SCALE GENOMIC DNA]</scope>
    <source>
        <strain>C57BL/6J</strain>
    </source>
</reference>
<reference key="3">
    <citation type="submission" date="2005-07" db="EMBL/GenBank/DDBJ databases">
        <authorList>
            <person name="Mural R.J."/>
            <person name="Adams M.D."/>
            <person name="Myers E.W."/>
            <person name="Smith H.O."/>
            <person name="Venter J.C."/>
        </authorList>
    </citation>
    <scope>NUCLEOTIDE SEQUENCE [LARGE SCALE GENOMIC DNA]</scope>
</reference>
<reference key="4">
    <citation type="journal article" date="2007" name="J. Biol. Chem.">
        <title>The function of guanylate cyclase 1 and guanylate cyclase 2 in rod and cone photoreceptors.</title>
        <authorList>
            <person name="Baehr W."/>
            <person name="Karan S."/>
            <person name="Maeda T."/>
            <person name="Luo D.G."/>
            <person name="Li S."/>
            <person name="Bronson J.D."/>
            <person name="Watt C.B."/>
            <person name="Yau K.W."/>
            <person name="Frederick J.M."/>
            <person name="Palczewski K."/>
        </authorList>
    </citation>
    <scope>DISRUPTION PHENOTYPE</scope>
    <scope>FUNCTION</scope>
</reference>
<reference key="5">
    <citation type="journal article" date="2011" name="Biochemistry">
        <title>Enzymatic properties and regulation of the native isozymes of retinal membrane guanylyl cyclase (RetGC) from mouse photoreceptors.</title>
        <authorList>
            <person name="Peshenko I.V."/>
            <person name="Olshevskaya E.V."/>
            <person name="Savchenko A.B."/>
            <person name="Karan S."/>
            <person name="Palczewski K."/>
            <person name="Baehr W."/>
            <person name="Dizhoor A.M."/>
        </authorList>
    </citation>
    <scope>ACTIVITY REGULATION</scope>
    <scope>SUBCELLULAR LOCATION</scope>
    <scope>CATALYTIC ACTIVITY</scope>
    <scope>BIOPHYSICOCHEMICAL PROPERTIES</scope>
    <scope>FUNCTION</scope>
</reference>
<accession>P52785</accession>
<accession>B1ASX7</accession>
<comment type="function">
    <text evidence="9 10">Catalyzes the synthesis of cyclic GMP (cGMP) in rods and cones of photoreceptors. Plays an essential role in phototransduction, by mediating cGMP replenishment (PubMed:21598940). May also participate in the trafficking of membrane-asociated proteins to the photoreceptor outer segment membrane (PubMed:17255100).</text>
</comment>
<comment type="catalytic activity">
    <reaction evidence="10">
        <text>GTP = 3',5'-cyclic GMP + diphosphate</text>
        <dbReference type="Rhea" id="RHEA:13665"/>
        <dbReference type="ChEBI" id="CHEBI:33019"/>
        <dbReference type="ChEBI" id="CHEBI:37565"/>
        <dbReference type="ChEBI" id="CHEBI:57746"/>
        <dbReference type="EC" id="4.6.1.2"/>
    </reaction>
</comment>
<comment type="activity regulation">
    <text evidence="4 10">Activated by GUCA1A when free calcium ions concentration is low, and inhibited by GUCA1A when free calcium ions concentration is high (PubMed:21598940). Negatively regulated by RD3; RD3 inhibits the basal and GUCA1A-stimulated guanylate cyclase activity (By similarity).</text>
</comment>
<comment type="biophysicochemical properties">
    <kinetics>
        <KM evidence="10">0.64 mM for GTP (in presence of GUCA1A)</KM>
        <KM evidence="10">0.7 mM for GTP (in presence of GUCA1B)</KM>
        <KM evidence="10">1.55 nM for GTP</KM>
    </kinetics>
</comment>
<comment type="subunit">
    <text evidence="2 4">Homodimer; requires homodimerization for guanylyl cyclase activity (By similarity). Interacts (via C-terminus) with RD3 (via C-terminus); promotes the exit of GUCY2E from the endoplasmic reticulum and its trafficking to the photoreceptor outer segments (By similarity). Interaction with RD3 negatively regulates GUCY2E guanylate cyclase activity (By similarity).</text>
</comment>
<comment type="subcellular location">
    <subcellularLocation>
        <location evidence="10">Photoreceptor outer segment membrane</location>
        <topology evidence="5">Single-pass type I membrane protein</topology>
    </subcellularLocation>
    <subcellularLocation>
        <location evidence="4">Endoplasmic reticulum membrane</location>
        <topology evidence="5">Single-pass type I membrane protein</topology>
    </subcellularLocation>
</comment>
<comment type="PTM">
    <text>There are 9 conserved cysteine residues in sensory guanylate cyclases, 6 in the extracellular domain, which may be involved in intra- or interchain disulfide bonds.</text>
</comment>
<comment type="disruption phenotype">
    <text evidence="9">Deficient mice exhibit abnormal retinal cone cell morphology, impaired cone and rod electrophysiology, and severe retinal cone cell degeneration. GUCY2E and GUCY2F double knockout mice does not show any photoresponse, their rods and cones degenerate and the intracellular transport of some phototransduction proteins is impaired.</text>
</comment>
<comment type="miscellaneous">
    <text evidence="11">The gene name nomenclature of retinal guanylyl cyclase 1 is confusing; for mouse the gene name is GUCY2E whereas the gene name is GUCY2D for human and rat orthologs.</text>
</comment>
<comment type="similarity">
    <text evidence="6">Belongs to the adenylyl cyclase class-4/guanylyl cyclase family.</text>
</comment>
<name>GUC2E_MOUSE</name>
<gene>
    <name type="primary">Gucy2e</name>
    <name type="synonym">Guc2e</name>
</gene>
<feature type="signal peptide" evidence="3">
    <location>
        <begin position="1"/>
        <end position="54"/>
    </location>
</feature>
<feature type="chain" id="PRO_0000012383" description="Retinal guanylyl cyclase 1">
    <location>
        <begin position="55"/>
        <end position="1108"/>
    </location>
</feature>
<feature type="topological domain" description="Extracellular" evidence="5">
    <location>
        <begin position="55"/>
        <end position="465"/>
    </location>
</feature>
<feature type="transmembrane region" description="Helical" evidence="5">
    <location>
        <begin position="466"/>
        <end position="490"/>
    </location>
</feature>
<feature type="topological domain" description="Cytoplasmic" evidence="5">
    <location>
        <begin position="491"/>
        <end position="1108"/>
    </location>
</feature>
<feature type="domain" description="Protein kinase" evidence="7">
    <location>
        <begin position="491"/>
        <end position="811"/>
    </location>
</feature>
<feature type="domain" description="Guanylate cyclase" evidence="6">
    <location>
        <begin position="883"/>
        <end position="1013"/>
    </location>
</feature>
<feature type="region of interest" description="Disordered" evidence="8">
    <location>
        <begin position="1069"/>
        <end position="1108"/>
    </location>
</feature>
<feature type="glycosylation site" description="N-linked (GlcNAc...) asparagine" evidence="5">
    <location>
        <position position="300"/>
    </location>
</feature>
<feature type="disulfide bond" evidence="1">
    <location>
        <begin position="108"/>
        <end position="136"/>
    </location>
</feature>
<feature type="disulfide bond" description="Interchain" evidence="1">
    <location>
        <position position="452"/>
    </location>
</feature>
<feature type="disulfide bond" description="Interchain" evidence="1">
    <location>
        <position position="460"/>
    </location>
</feature>
<feature type="sequence conflict" description="In Ref. 1; AAC42081." evidence="11" ref="1">
    <original>G</original>
    <variation>R</variation>
    <location>
        <position position="15"/>
    </location>
</feature>
<feature type="sequence conflict" description="In Ref. 1; AAC42081." evidence="11" ref="1">
    <original>A</original>
    <variation>G</variation>
    <location>
        <position position="92"/>
    </location>
</feature>
<feature type="sequence conflict" description="In Ref. 1; AAC42081." evidence="11" ref="1">
    <original>A</original>
    <variation>G</variation>
    <location>
        <position position="135"/>
    </location>
</feature>
<feature type="sequence conflict" description="In Ref. 1; AAC42081." evidence="11" ref="1">
    <original>A</original>
    <variation>S</variation>
    <location>
        <position position="1033"/>
    </location>
</feature>
<protein>
    <recommendedName>
        <fullName>Retinal guanylyl cyclase 1</fullName>
    </recommendedName>
    <alternativeName>
        <fullName>Guanylate cyclase 2E</fullName>
    </alternativeName>
    <alternativeName>
        <fullName>Guanylyl cyclase GC-E</fullName>
        <ecNumber evidence="10">4.6.1.2</ecNumber>
    </alternativeName>
</protein>
<organism>
    <name type="scientific">Mus musculus</name>
    <name type="common">Mouse</name>
    <dbReference type="NCBI Taxonomy" id="10090"/>
    <lineage>
        <taxon>Eukaryota</taxon>
        <taxon>Metazoa</taxon>
        <taxon>Chordata</taxon>
        <taxon>Craniata</taxon>
        <taxon>Vertebrata</taxon>
        <taxon>Euteleostomi</taxon>
        <taxon>Mammalia</taxon>
        <taxon>Eutheria</taxon>
        <taxon>Euarchontoglires</taxon>
        <taxon>Glires</taxon>
        <taxon>Rodentia</taxon>
        <taxon>Myomorpha</taxon>
        <taxon>Muroidea</taxon>
        <taxon>Muridae</taxon>
        <taxon>Murinae</taxon>
        <taxon>Mus</taxon>
        <taxon>Mus</taxon>
    </lineage>
</organism>
<proteinExistence type="evidence at protein level"/>